<name>UC29_MAIZE</name>
<dbReference type="MaizeGDB" id="123960"/>
<dbReference type="InParanoid" id="P80635"/>
<dbReference type="Proteomes" id="UP000007305">
    <property type="component" value="Unplaced"/>
</dbReference>
<accession>P80635</accession>
<reference key="1">
    <citation type="journal article" date="1996" name="Theor. Appl. Genet.">
        <title>The maize two dimensional gel protein database: towards an integrated genome analysis program.</title>
        <authorList>
            <person name="Touzet P."/>
            <person name="Riccardi F."/>
            <person name="Morin C."/>
            <person name="Damerval C."/>
            <person name="Huet J.-C."/>
            <person name="Pernollet J.-C."/>
            <person name="Zivy M."/>
            <person name="de Vienne D."/>
        </authorList>
        <dbReference type="AGRICOLA" id="IND20551642"/>
    </citation>
    <scope>PROTEIN SEQUENCE</scope>
    <source>
        <tissue>Coleoptile</tissue>
    </source>
</reference>
<sequence>NPNPVPIPLVDIDYL</sequence>
<feature type="chain" id="PRO_0000055525" description="Unknown protein from spot 45 of 2D-PAGE of etiolated coleoptile">
    <location>
        <begin position="1" status="less than"/>
        <end position="15" status="greater than"/>
    </location>
</feature>
<feature type="non-terminal residue">
    <location>
        <position position="1"/>
    </location>
</feature>
<feature type="non-terminal residue">
    <location>
        <position position="15"/>
    </location>
</feature>
<proteinExistence type="evidence at protein level"/>
<organism>
    <name type="scientific">Zea mays</name>
    <name type="common">Maize</name>
    <dbReference type="NCBI Taxonomy" id="4577"/>
    <lineage>
        <taxon>Eukaryota</taxon>
        <taxon>Viridiplantae</taxon>
        <taxon>Streptophyta</taxon>
        <taxon>Embryophyta</taxon>
        <taxon>Tracheophyta</taxon>
        <taxon>Spermatophyta</taxon>
        <taxon>Magnoliopsida</taxon>
        <taxon>Liliopsida</taxon>
        <taxon>Poales</taxon>
        <taxon>Poaceae</taxon>
        <taxon>PACMAD clade</taxon>
        <taxon>Panicoideae</taxon>
        <taxon>Andropogonodae</taxon>
        <taxon>Andropogoneae</taxon>
        <taxon>Tripsacinae</taxon>
        <taxon>Zea</taxon>
    </lineage>
</organism>
<comment type="miscellaneous">
    <text>On the 2D-gel the determined pI of this unknown protein is: 4.9, its MW is: 37.6 kDa.</text>
</comment>
<keyword id="KW-0903">Direct protein sequencing</keyword>
<keyword id="KW-1185">Reference proteome</keyword>
<protein>
    <recommendedName>
        <fullName>Unknown protein from spot 45 of 2D-PAGE of etiolated coleoptile</fullName>
    </recommendedName>
</protein>